<gene>
    <name type="primary">abcB7</name>
    <name type="ORF">DDB_G0269720</name>
</gene>
<evidence type="ECO:0000255" key="1">
    <source>
        <dbReference type="PROSITE-ProRule" id="PRU00434"/>
    </source>
</evidence>
<evidence type="ECO:0000255" key="2">
    <source>
        <dbReference type="PROSITE-ProRule" id="PRU00441"/>
    </source>
</evidence>
<evidence type="ECO:0000256" key="3">
    <source>
        <dbReference type="SAM" id="MobiDB-lite"/>
    </source>
</evidence>
<evidence type="ECO:0000305" key="4"/>
<dbReference type="EMBL" id="AAFI02000005">
    <property type="protein sequence ID" value="EAL72210.1"/>
    <property type="molecule type" value="Genomic_DNA"/>
</dbReference>
<dbReference type="RefSeq" id="XP_646224.1">
    <property type="nucleotide sequence ID" value="XM_641132.1"/>
</dbReference>
<dbReference type="SMR" id="Q55DA7"/>
<dbReference type="STRING" id="44689.Q55DA7"/>
<dbReference type="GlyGen" id="Q55DA7">
    <property type="glycosylation" value="2 sites"/>
</dbReference>
<dbReference type="PaxDb" id="44689-DDB0220443"/>
<dbReference type="EnsemblProtists" id="EAL72210">
    <property type="protein sequence ID" value="EAL72210"/>
    <property type="gene ID" value="DDB_G0269720"/>
</dbReference>
<dbReference type="GeneID" id="8617178"/>
<dbReference type="KEGG" id="ddi:DDB_G0269720"/>
<dbReference type="dictyBase" id="DDB_G0269720">
    <property type="gene designation" value="abcB7"/>
</dbReference>
<dbReference type="VEuPathDB" id="AmoebaDB:DDB_G0269720"/>
<dbReference type="eggNOG" id="KOG0058">
    <property type="taxonomic scope" value="Eukaryota"/>
</dbReference>
<dbReference type="HOGENOM" id="CLU_343695_0_0_1"/>
<dbReference type="InParanoid" id="Q55DA7"/>
<dbReference type="OMA" id="YIRPQIW"/>
<dbReference type="PhylomeDB" id="Q55DA7"/>
<dbReference type="Reactome" id="R-DDI-1369007">
    <property type="pathway name" value="Mitochondrial ABC transporters"/>
</dbReference>
<dbReference type="Reactome" id="R-DDI-159418">
    <property type="pathway name" value="Recycling of bile acids and salts"/>
</dbReference>
<dbReference type="Reactome" id="R-DDI-193368">
    <property type="pathway name" value="Synthesis of bile acids and bile salts via 7alpha-hydroxycholesterol"/>
</dbReference>
<dbReference type="Reactome" id="R-DDI-382556">
    <property type="pathway name" value="ABC-family proteins mediated transport"/>
</dbReference>
<dbReference type="Reactome" id="R-DDI-9754706">
    <property type="pathway name" value="Atorvastatin ADME"/>
</dbReference>
<dbReference type="Reactome" id="R-DDI-9757110">
    <property type="pathway name" value="Prednisone ADME"/>
</dbReference>
<dbReference type="PRO" id="PR:Q55DA7"/>
<dbReference type="Proteomes" id="UP000002195">
    <property type="component" value="Chromosome 1"/>
</dbReference>
<dbReference type="GO" id="GO:0016020">
    <property type="term" value="C:membrane"/>
    <property type="evidence" value="ECO:0000318"/>
    <property type="project" value="GO_Central"/>
</dbReference>
<dbReference type="GO" id="GO:0140359">
    <property type="term" value="F:ABC-type transporter activity"/>
    <property type="evidence" value="ECO:0007669"/>
    <property type="project" value="InterPro"/>
</dbReference>
<dbReference type="GO" id="GO:0005524">
    <property type="term" value="F:ATP binding"/>
    <property type="evidence" value="ECO:0007669"/>
    <property type="project" value="UniProtKB-KW"/>
</dbReference>
<dbReference type="GO" id="GO:0016887">
    <property type="term" value="F:ATP hydrolysis activity"/>
    <property type="evidence" value="ECO:0007669"/>
    <property type="project" value="InterPro"/>
</dbReference>
<dbReference type="GO" id="GO:0042626">
    <property type="term" value="F:ATPase-coupled transmembrane transporter activity"/>
    <property type="evidence" value="ECO:0000318"/>
    <property type="project" value="GO_Central"/>
</dbReference>
<dbReference type="GO" id="GO:0006935">
    <property type="term" value="P:chemotaxis"/>
    <property type="evidence" value="ECO:0000315"/>
    <property type="project" value="dictyBase"/>
</dbReference>
<dbReference type="GO" id="GO:0055085">
    <property type="term" value="P:transmembrane transport"/>
    <property type="evidence" value="ECO:0000318"/>
    <property type="project" value="GO_Central"/>
</dbReference>
<dbReference type="CDD" id="cd18557">
    <property type="entry name" value="ABC_6TM_TAP_ABCB8_10_like"/>
    <property type="match status" value="1"/>
</dbReference>
<dbReference type="FunFam" id="3.40.50.300:FF:005830">
    <property type="entry name" value="ABC transporter B family member 7"/>
    <property type="match status" value="1"/>
</dbReference>
<dbReference type="Gene3D" id="1.20.1560.10">
    <property type="entry name" value="ABC transporter type 1, transmembrane domain"/>
    <property type="match status" value="1"/>
</dbReference>
<dbReference type="Gene3D" id="3.40.50.300">
    <property type="entry name" value="P-loop containing nucleotide triphosphate hydrolases"/>
    <property type="match status" value="1"/>
</dbReference>
<dbReference type="InterPro" id="IPR011527">
    <property type="entry name" value="ABC1_TM_dom"/>
</dbReference>
<dbReference type="InterPro" id="IPR036640">
    <property type="entry name" value="ABC1_TM_sf"/>
</dbReference>
<dbReference type="InterPro" id="IPR003439">
    <property type="entry name" value="ABC_transporter-like_ATP-bd"/>
</dbReference>
<dbReference type="InterPro" id="IPR027417">
    <property type="entry name" value="P-loop_NTPase"/>
</dbReference>
<dbReference type="InterPro" id="IPR039421">
    <property type="entry name" value="Type_1_exporter"/>
</dbReference>
<dbReference type="PANTHER" id="PTHR43394:SF1">
    <property type="entry name" value="ATP-BINDING CASSETTE SUB-FAMILY B MEMBER 10, MITOCHONDRIAL"/>
    <property type="match status" value="1"/>
</dbReference>
<dbReference type="PANTHER" id="PTHR43394">
    <property type="entry name" value="ATP-DEPENDENT PERMEASE MDL1, MITOCHONDRIAL"/>
    <property type="match status" value="1"/>
</dbReference>
<dbReference type="Pfam" id="PF00664">
    <property type="entry name" value="ABC_membrane"/>
    <property type="match status" value="1"/>
</dbReference>
<dbReference type="Pfam" id="PF00005">
    <property type="entry name" value="ABC_tran"/>
    <property type="match status" value="1"/>
</dbReference>
<dbReference type="SUPFAM" id="SSF90123">
    <property type="entry name" value="ABC transporter transmembrane region"/>
    <property type="match status" value="1"/>
</dbReference>
<dbReference type="SUPFAM" id="SSF52540">
    <property type="entry name" value="P-loop containing nucleoside triphosphate hydrolases"/>
    <property type="match status" value="1"/>
</dbReference>
<dbReference type="PROSITE" id="PS50929">
    <property type="entry name" value="ABC_TM1F"/>
    <property type="match status" value="1"/>
</dbReference>
<dbReference type="PROSITE" id="PS50893">
    <property type="entry name" value="ABC_TRANSPORTER_2"/>
    <property type="match status" value="1"/>
</dbReference>
<name>ABCB7_DICDI</name>
<accession>Q55DA7</accession>
<protein>
    <recommendedName>
        <fullName>ABC transporter B family member 7</fullName>
    </recommendedName>
    <alternativeName>
        <fullName>ABC transporter ABCB.7</fullName>
    </alternativeName>
</protein>
<feature type="chain" id="PRO_0000391328" description="ABC transporter B family member 7">
    <location>
        <begin position="1"/>
        <end position="824"/>
    </location>
</feature>
<feature type="transmembrane region" description="Helical" evidence="2">
    <location>
        <begin position="164"/>
        <end position="184"/>
    </location>
</feature>
<feature type="transmembrane region" description="Helical" evidence="2">
    <location>
        <begin position="252"/>
        <end position="272"/>
    </location>
</feature>
<feature type="transmembrane region" description="Helical" evidence="2">
    <location>
        <begin position="325"/>
        <end position="345"/>
    </location>
</feature>
<feature type="transmembrane region" description="Helical" evidence="2">
    <location>
        <begin position="347"/>
        <end position="367"/>
    </location>
</feature>
<feature type="transmembrane region" description="Helical" evidence="2">
    <location>
        <begin position="431"/>
        <end position="451"/>
    </location>
</feature>
<feature type="transmembrane region" description="Helical" evidence="2">
    <location>
        <begin position="461"/>
        <end position="481"/>
    </location>
</feature>
<feature type="domain" description="ABC transmembrane type-1" evidence="2">
    <location>
        <begin position="167"/>
        <end position="489"/>
    </location>
</feature>
<feature type="domain" description="ABC transporter" evidence="1">
    <location>
        <begin position="521"/>
        <end position="767"/>
    </location>
</feature>
<feature type="region of interest" description="Disordered" evidence="3">
    <location>
        <begin position="41"/>
        <end position="101"/>
    </location>
</feature>
<feature type="region of interest" description="Disordered" evidence="3">
    <location>
        <begin position="772"/>
        <end position="813"/>
    </location>
</feature>
<feature type="compositionally biased region" description="Low complexity" evidence="3">
    <location>
        <begin position="63"/>
        <end position="101"/>
    </location>
</feature>
<feature type="binding site" evidence="1">
    <location>
        <begin position="570"/>
        <end position="576"/>
    </location>
    <ligand>
        <name>ATP</name>
        <dbReference type="ChEBI" id="CHEBI:30616"/>
    </ligand>
</feature>
<keyword id="KW-0067">ATP-binding</keyword>
<keyword id="KW-0472">Membrane</keyword>
<keyword id="KW-0547">Nucleotide-binding</keyword>
<keyword id="KW-1185">Reference proteome</keyword>
<keyword id="KW-0812">Transmembrane</keyword>
<keyword id="KW-1133">Transmembrane helix</keyword>
<keyword id="KW-0813">Transport</keyword>
<sequence>MTRKSNYNYLDEDNIEDESPIGLGTSPIEFNLDKENKNKKRNSVKFNLDTPLPIINNKSSQDNNNKNNNNNNNNNNNNNNNNNNNNNNNNNNKNNKNKINNSLNSITPYLVDYKDDFDFKRSVYDFDDVDYLEEDSFDEHSFYKTSYSTRRCIYRILTYIRPQIWYFVFAFLALSITTLCQLALPYCFANGIQEAIRVNLTVNSVNSTDNNIIITPTPTPNITTTTTNPTVLESITSKYTSLFGNTEYDFKWIIIIVLVQTPFLFARYLLFTMAGFSVVTKLKRDLFKSLLTQEVSYFDSNRTGDLKAVIASDSSILQNCITVSLSTLVRCSLQLIGGLLILVFLSWKVTLLMISFLVILLISFLVFKKWIHPKYNYIQEKLVNIGLIIDDSIGNIKEIRLLNAESKELRSFETELEILHRSSRSFVLMNAFWISFGSLLVMGTIIGIYGFAMSQTLSNSILLLQFILYSLMITASMNGLIGSINEIQKLISSSKRIFSLIDRKPIVHFQGGITPSTDSNISFDNVYFNNNNNNSNNNNNNNNNNKNNNGMILSNVSFIVNKGQWLSLVGPSQSKEFIFSLIQGLYYPTRGTVFIGRIDTKVLDLYFFRSRLFTISPLQTVIFDGTVEQNIRYGLSHLSTQNIIDASKKANLHDFVIGLPHGYDSMIGKNNFFDPIQILKISIARAFLRNPSVLLLDETTLPFDSKEIEDSIELLVQNKTVIAIANKLSTLKRSNNILVFDDNRIIERGTHSELSQKSTSFYVTSVLNSINNKYNNNNNNNNNNNNNNNNNNNNNNNNNNNNNNNNNNNNINNNNKIEIYLFLI</sequence>
<proteinExistence type="inferred from homology"/>
<comment type="subcellular location">
    <subcellularLocation>
        <location evidence="2">Membrane</location>
        <topology evidence="2">Multi-pass membrane protein</topology>
    </subcellularLocation>
</comment>
<comment type="similarity">
    <text evidence="4">Belongs to the ABC transporter superfamily. ABCB family.</text>
</comment>
<reference key="1">
    <citation type="journal article" date="2005" name="Nature">
        <title>The genome of the social amoeba Dictyostelium discoideum.</title>
        <authorList>
            <person name="Eichinger L."/>
            <person name="Pachebat J.A."/>
            <person name="Gloeckner G."/>
            <person name="Rajandream M.A."/>
            <person name="Sucgang R."/>
            <person name="Berriman M."/>
            <person name="Song J."/>
            <person name="Olsen R."/>
            <person name="Szafranski K."/>
            <person name="Xu Q."/>
            <person name="Tunggal B."/>
            <person name="Kummerfeld S."/>
            <person name="Madera M."/>
            <person name="Konfortov B.A."/>
            <person name="Rivero F."/>
            <person name="Bankier A.T."/>
            <person name="Lehmann R."/>
            <person name="Hamlin N."/>
            <person name="Davies R."/>
            <person name="Gaudet P."/>
            <person name="Fey P."/>
            <person name="Pilcher K."/>
            <person name="Chen G."/>
            <person name="Saunders D."/>
            <person name="Sodergren E.J."/>
            <person name="Davis P."/>
            <person name="Kerhornou A."/>
            <person name="Nie X."/>
            <person name="Hall N."/>
            <person name="Anjard C."/>
            <person name="Hemphill L."/>
            <person name="Bason N."/>
            <person name="Farbrother P."/>
            <person name="Desany B."/>
            <person name="Just E."/>
            <person name="Morio T."/>
            <person name="Rost R."/>
            <person name="Churcher C.M."/>
            <person name="Cooper J."/>
            <person name="Haydock S."/>
            <person name="van Driessche N."/>
            <person name="Cronin A."/>
            <person name="Goodhead I."/>
            <person name="Muzny D.M."/>
            <person name="Mourier T."/>
            <person name="Pain A."/>
            <person name="Lu M."/>
            <person name="Harper D."/>
            <person name="Lindsay R."/>
            <person name="Hauser H."/>
            <person name="James K.D."/>
            <person name="Quiles M."/>
            <person name="Madan Babu M."/>
            <person name="Saito T."/>
            <person name="Buchrieser C."/>
            <person name="Wardroper A."/>
            <person name="Felder M."/>
            <person name="Thangavelu M."/>
            <person name="Johnson D."/>
            <person name="Knights A."/>
            <person name="Loulseged H."/>
            <person name="Mungall K.L."/>
            <person name="Oliver K."/>
            <person name="Price C."/>
            <person name="Quail M.A."/>
            <person name="Urushihara H."/>
            <person name="Hernandez J."/>
            <person name="Rabbinowitsch E."/>
            <person name="Steffen D."/>
            <person name="Sanders M."/>
            <person name="Ma J."/>
            <person name="Kohara Y."/>
            <person name="Sharp S."/>
            <person name="Simmonds M.N."/>
            <person name="Spiegler S."/>
            <person name="Tivey A."/>
            <person name="Sugano S."/>
            <person name="White B."/>
            <person name="Walker D."/>
            <person name="Woodward J.R."/>
            <person name="Winckler T."/>
            <person name="Tanaka Y."/>
            <person name="Shaulsky G."/>
            <person name="Schleicher M."/>
            <person name="Weinstock G.M."/>
            <person name="Rosenthal A."/>
            <person name="Cox E.C."/>
            <person name="Chisholm R.L."/>
            <person name="Gibbs R.A."/>
            <person name="Loomis W.F."/>
            <person name="Platzer M."/>
            <person name="Kay R.R."/>
            <person name="Williams J.G."/>
            <person name="Dear P.H."/>
            <person name="Noegel A.A."/>
            <person name="Barrell B.G."/>
            <person name="Kuspa A."/>
        </authorList>
    </citation>
    <scope>NUCLEOTIDE SEQUENCE [LARGE SCALE GENOMIC DNA]</scope>
    <source>
        <strain>AX4</strain>
    </source>
</reference>
<organism>
    <name type="scientific">Dictyostelium discoideum</name>
    <name type="common">Social amoeba</name>
    <dbReference type="NCBI Taxonomy" id="44689"/>
    <lineage>
        <taxon>Eukaryota</taxon>
        <taxon>Amoebozoa</taxon>
        <taxon>Evosea</taxon>
        <taxon>Eumycetozoa</taxon>
        <taxon>Dictyostelia</taxon>
        <taxon>Dictyosteliales</taxon>
        <taxon>Dictyosteliaceae</taxon>
        <taxon>Dictyostelium</taxon>
    </lineage>
</organism>